<comment type="subcellular location">
    <subcellularLocation>
        <location evidence="3">Secreted</location>
    </subcellularLocation>
</comment>
<protein>
    <recommendedName>
        <fullName>Psoriasis susceptibility 1 candidate gene 2 protein homolog</fullName>
    </recommendedName>
    <alternativeName>
        <fullName>Protein SPR1</fullName>
    </alternativeName>
</protein>
<reference key="1">
    <citation type="journal article" date="2003" name="Exp. Dermatol.">
        <title>Polymorphisms in the SEEK1 and SPR1 genes on 6p21.3 associate with psoriasis in the Swedish population.</title>
        <authorList>
            <person name="Holm S.J."/>
            <person name="Carlen L.M."/>
            <person name="Mallbris L."/>
            <person name="Staehle-Baeckdahl M."/>
            <person name="O'Brien K.P."/>
        </authorList>
    </citation>
    <scope>NUCLEOTIDE SEQUENCE [MRNA]</scope>
    <source>
        <strain>C57BL/6J</strain>
        <tissue>Skin</tissue>
    </source>
</reference>
<feature type="signal peptide" evidence="1">
    <location>
        <begin position="1"/>
        <end position="21"/>
    </location>
</feature>
<feature type="chain" id="PRO_0000022160" description="Psoriasis susceptibility 1 candidate gene 2 protein homolog">
    <location>
        <begin position="22"/>
        <end position="134"/>
    </location>
</feature>
<feature type="region of interest" description="Disordered" evidence="2">
    <location>
        <begin position="18"/>
        <end position="134"/>
    </location>
</feature>
<feature type="compositionally biased region" description="Pro residues" evidence="2">
    <location>
        <begin position="39"/>
        <end position="67"/>
    </location>
</feature>
<feature type="compositionally biased region" description="Pro residues" evidence="2">
    <location>
        <begin position="81"/>
        <end position="98"/>
    </location>
</feature>
<feature type="compositionally biased region" description="Acidic residues" evidence="2">
    <location>
        <begin position="122"/>
        <end position="134"/>
    </location>
</feature>
<sequence length="134" mass="14414">MLTWKLLGLLVLCLCAGGISGNGDPSPGSTDTHEEEDSPPLPLGPPIPGDPWPGAPPLFDEPPPPGSNRPWRDLPDSGAWPPKPPSTDPPKPPLPDDPWPAGTQPPENPWPPAPEMDHESQEEPDLDPPQEEYR</sequence>
<proteinExistence type="evidence at transcript level"/>
<dbReference type="EMBL" id="AF484421">
    <property type="protein sequence ID" value="AAO49378.1"/>
    <property type="molecule type" value="mRNA"/>
</dbReference>
<dbReference type="RefSeq" id="NP_065601.2">
    <property type="nucleotide sequence ID" value="NM_020576.2"/>
</dbReference>
<dbReference type="STRING" id="10090.ENSMUSP00000025273"/>
<dbReference type="PaxDb" id="10090-ENSMUSP00000025273"/>
<dbReference type="DNASU" id="57390"/>
<dbReference type="GeneID" id="57390"/>
<dbReference type="KEGG" id="mmu:57390"/>
<dbReference type="AGR" id="MGI:1930025"/>
<dbReference type="CTD" id="170680"/>
<dbReference type="MGI" id="MGI:1930025">
    <property type="gene designation" value="Psors1c2"/>
</dbReference>
<dbReference type="eggNOG" id="ENOG502QQEE">
    <property type="taxonomic scope" value="Eukaryota"/>
</dbReference>
<dbReference type="InParanoid" id="Q80ZC9"/>
<dbReference type="OMA" id="LPDDPWP"/>
<dbReference type="BioGRID-ORCS" id="57390">
    <property type="hits" value="3 hits in 78 CRISPR screens"/>
</dbReference>
<dbReference type="PRO" id="PR:Q80ZC9"/>
<dbReference type="Proteomes" id="UP000000589">
    <property type="component" value="Unplaced"/>
</dbReference>
<dbReference type="RNAct" id="Q80ZC9">
    <property type="molecule type" value="protein"/>
</dbReference>
<dbReference type="GO" id="GO:0005576">
    <property type="term" value="C:extracellular region"/>
    <property type="evidence" value="ECO:0007669"/>
    <property type="project" value="UniProtKB-SubCell"/>
</dbReference>
<dbReference type="InterPro" id="IPR029271">
    <property type="entry name" value="SPR1"/>
</dbReference>
<dbReference type="PANTHER" id="PTHR31853">
    <property type="entry name" value="PSORIASIS SUSCEPTIBILITY 1 CANDIDATE GENE 2 PROTEIN"/>
    <property type="match status" value="1"/>
</dbReference>
<dbReference type="PANTHER" id="PTHR31853:SF1">
    <property type="entry name" value="PSORIASIS SUSCEPTIBILITY 1 CANDIDATE GENE 2 PROTEIN"/>
    <property type="match status" value="1"/>
</dbReference>
<dbReference type="Pfam" id="PF15356">
    <property type="entry name" value="SPR1"/>
    <property type="match status" value="1"/>
</dbReference>
<name>PS1C2_MOUSE</name>
<gene>
    <name type="primary">Psors1c2</name>
    <name type="synonym">Spr1</name>
</gene>
<keyword id="KW-1185">Reference proteome</keyword>
<keyword id="KW-0964">Secreted</keyword>
<keyword id="KW-0732">Signal</keyword>
<evidence type="ECO:0000255" key="1"/>
<evidence type="ECO:0000256" key="2">
    <source>
        <dbReference type="SAM" id="MobiDB-lite"/>
    </source>
</evidence>
<evidence type="ECO:0000305" key="3"/>
<organism>
    <name type="scientific">Mus musculus</name>
    <name type="common">Mouse</name>
    <dbReference type="NCBI Taxonomy" id="10090"/>
    <lineage>
        <taxon>Eukaryota</taxon>
        <taxon>Metazoa</taxon>
        <taxon>Chordata</taxon>
        <taxon>Craniata</taxon>
        <taxon>Vertebrata</taxon>
        <taxon>Euteleostomi</taxon>
        <taxon>Mammalia</taxon>
        <taxon>Eutheria</taxon>
        <taxon>Euarchontoglires</taxon>
        <taxon>Glires</taxon>
        <taxon>Rodentia</taxon>
        <taxon>Myomorpha</taxon>
        <taxon>Muroidea</taxon>
        <taxon>Muridae</taxon>
        <taxon>Murinae</taxon>
        <taxon>Mus</taxon>
        <taxon>Mus</taxon>
    </lineage>
</organism>
<accession>Q80ZC9</accession>